<proteinExistence type="inferred from homology"/>
<gene>
    <name evidence="1" type="primary">eif2b</name>
    <name type="ordered locus">OE_2809R</name>
</gene>
<accession>B0R583</accession>
<dbReference type="EMBL" id="AM774415">
    <property type="protein sequence ID" value="CAP13899.1"/>
    <property type="molecule type" value="Genomic_DNA"/>
</dbReference>
<dbReference type="RefSeq" id="WP_010902915.1">
    <property type="nucleotide sequence ID" value="NC_010364.1"/>
</dbReference>
<dbReference type="SMR" id="B0R583"/>
<dbReference type="EnsemblBacteria" id="CAP13899">
    <property type="protein sequence ID" value="CAP13899"/>
    <property type="gene ID" value="OE_2809R"/>
</dbReference>
<dbReference type="KEGG" id="hsl:OE_2809R"/>
<dbReference type="HOGENOM" id="CLU_026663_3_1_2"/>
<dbReference type="PhylomeDB" id="B0R583"/>
<dbReference type="Proteomes" id="UP000001321">
    <property type="component" value="Chromosome"/>
</dbReference>
<dbReference type="GO" id="GO:0003743">
    <property type="term" value="F:translation initiation factor activity"/>
    <property type="evidence" value="ECO:0007669"/>
    <property type="project" value="UniProtKB-UniRule"/>
</dbReference>
<dbReference type="FunFam" id="3.30.30.170:FF:000008">
    <property type="match status" value="1"/>
</dbReference>
<dbReference type="Gene3D" id="3.30.30.170">
    <property type="match status" value="1"/>
</dbReference>
<dbReference type="HAMAP" id="MF_00232">
    <property type="entry name" value="eIF_2_beta"/>
    <property type="match status" value="1"/>
</dbReference>
<dbReference type="InterPro" id="IPR045196">
    <property type="entry name" value="IF2/IF5"/>
</dbReference>
<dbReference type="InterPro" id="IPR004458">
    <property type="entry name" value="TIF2_bsu_arc"/>
</dbReference>
<dbReference type="InterPro" id="IPR002735">
    <property type="entry name" value="Transl_init_fac_IF2/IF5_dom"/>
</dbReference>
<dbReference type="InterPro" id="IPR016189">
    <property type="entry name" value="Transl_init_fac_IF2/IF5_N"/>
</dbReference>
<dbReference type="InterPro" id="IPR016190">
    <property type="entry name" value="Transl_init_fac_IF2/IF5_Zn-bd"/>
</dbReference>
<dbReference type="NCBIfam" id="NF003067">
    <property type="entry name" value="PRK03988.1"/>
    <property type="match status" value="1"/>
</dbReference>
<dbReference type="PANTHER" id="PTHR23001">
    <property type="entry name" value="EUKARYOTIC TRANSLATION INITIATION FACTOR"/>
    <property type="match status" value="1"/>
</dbReference>
<dbReference type="PANTHER" id="PTHR23001:SF3">
    <property type="entry name" value="EUKARYOTIC TRANSLATION INITIATION FACTOR 2 SUBUNIT 2"/>
    <property type="match status" value="1"/>
</dbReference>
<dbReference type="Pfam" id="PF01873">
    <property type="entry name" value="eIF-5_eIF-2B"/>
    <property type="match status" value="1"/>
</dbReference>
<dbReference type="SMART" id="SM00653">
    <property type="entry name" value="eIF2B_5"/>
    <property type="match status" value="1"/>
</dbReference>
<dbReference type="SUPFAM" id="SSF100966">
    <property type="entry name" value="Translation initiation factor 2 beta, aIF2beta, N-terminal domain"/>
    <property type="match status" value="1"/>
</dbReference>
<dbReference type="SUPFAM" id="SSF75689">
    <property type="entry name" value="Zinc-binding domain of translation initiation factor 2 beta"/>
    <property type="match status" value="1"/>
</dbReference>
<comment type="function">
    <text evidence="1">eIF-2 functions in the early steps of protein synthesis by forming a ternary complex with GTP and initiator tRNA.</text>
</comment>
<comment type="subunit">
    <text evidence="1">Heterotrimer composed of an alpha, a beta and a gamma chain.</text>
</comment>
<comment type="similarity">
    <text evidence="1">Belongs to the eIF-2-beta/eIF-5 family.</text>
</comment>
<reference key="1">
    <citation type="journal article" date="2008" name="Genomics">
        <title>Evolution in the laboratory: the genome of Halobacterium salinarum strain R1 compared to that of strain NRC-1.</title>
        <authorList>
            <person name="Pfeiffer F."/>
            <person name="Schuster S.C."/>
            <person name="Broicher A."/>
            <person name="Falb M."/>
            <person name="Palm P."/>
            <person name="Rodewald K."/>
            <person name="Ruepp A."/>
            <person name="Soppa J."/>
            <person name="Tittor J."/>
            <person name="Oesterhelt D."/>
        </authorList>
    </citation>
    <scope>NUCLEOTIDE SEQUENCE [LARGE SCALE GENOMIC DNA]</scope>
    <source>
        <strain>ATCC 29341 / DSM 671 / R1</strain>
    </source>
</reference>
<organism>
    <name type="scientific">Halobacterium salinarum (strain ATCC 29341 / DSM 671 / R1)</name>
    <dbReference type="NCBI Taxonomy" id="478009"/>
    <lineage>
        <taxon>Archaea</taxon>
        <taxon>Methanobacteriati</taxon>
        <taxon>Methanobacteriota</taxon>
        <taxon>Stenosarchaea group</taxon>
        <taxon>Halobacteria</taxon>
        <taxon>Halobacteriales</taxon>
        <taxon>Halobacteriaceae</taxon>
        <taxon>Halobacterium</taxon>
        <taxon>Halobacterium salinarum NRC-34001</taxon>
    </lineage>
</organism>
<evidence type="ECO:0000255" key="1">
    <source>
        <dbReference type="HAMAP-Rule" id="MF_00232"/>
    </source>
</evidence>
<evidence type="ECO:0000256" key="2">
    <source>
        <dbReference type="SAM" id="MobiDB-lite"/>
    </source>
</evidence>
<protein>
    <recommendedName>
        <fullName evidence="1">Translation initiation factor 2 subunit beta</fullName>
    </recommendedName>
    <alternativeName>
        <fullName evidence="1">aIF2-beta</fullName>
    </alternativeName>
    <alternativeName>
        <fullName evidence="1">eIF-2-beta</fullName>
    </alternativeName>
</protein>
<sequence>MDYEEQLDRAMDEKPDVTGSETRFEVPDPNVRKEGNVTVYENFQATLDALSRTQDHVLKFLQNEVGTSASIDESGRARLTGEFGQRRVSDTLDAYVETYVTCPECGLPDTNLETDGDTIQLHCEACGARSTV</sequence>
<name>IF2B_HALS3</name>
<feature type="chain" id="PRO_1000100486" description="Translation initiation factor 2 subunit beta">
    <location>
        <begin position="1"/>
        <end position="132"/>
    </location>
</feature>
<feature type="region of interest" description="Disordered" evidence="2">
    <location>
        <begin position="1"/>
        <end position="30"/>
    </location>
</feature>
<keyword id="KW-0396">Initiation factor</keyword>
<keyword id="KW-0648">Protein biosynthesis</keyword>